<feature type="chain" id="PRO_0000065842" description="Protein VirB6">
    <location>
        <begin position="1"/>
        <end position="295"/>
    </location>
</feature>
<feature type="transmembrane region" description="Helical" evidence="1">
    <location>
        <begin position="35"/>
        <end position="55"/>
    </location>
</feature>
<feature type="transmembrane region" description="Helical" evidence="1">
    <location>
        <begin position="68"/>
        <end position="88"/>
    </location>
</feature>
<feature type="transmembrane region" description="Helical" evidence="1">
    <location>
        <begin position="167"/>
        <end position="187"/>
    </location>
</feature>
<feature type="transmembrane region" description="Helical" evidence="1">
    <location>
        <begin position="201"/>
        <end position="221"/>
    </location>
</feature>
<feature type="transmembrane region" description="Helical" evidence="1">
    <location>
        <begin position="226"/>
        <end position="246"/>
    </location>
</feature>
<feature type="transmembrane region" description="Helical" evidence="1">
    <location>
        <begin position="251"/>
        <end position="271"/>
    </location>
</feature>
<geneLocation type="plasmid">
    <name>pTiA6</name>
</geneLocation>
<sequence>MNFTIPAPFTAIHTIFDVAFTTGLDSMLETIQEAVSAPLIACVTLWIIVQGILVIRGEVDTRSGITRVITVTIVVALIVGQANYQDYVVSIFEKTVPIFVQQFSVTGLPLQTVPAQLDTIFAVTQAVFQKIASEIGPMNDQDILAFQGAQWVLYGTLWSAFGVYDAVGILTKVLLAIGPLILVGYIFDRTRDIAAKWIGQLITIGLLLLLLNLVATIVILTEATALTLMLGVITFAGTTAAKIIGLYELDMFFLTGDALIVALPAIAGNIGGSYWSGATQSASSLYRRFAQVERG</sequence>
<accession>P09779</accession>
<comment type="subcellular location">
    <subcellularLocation>
        <location evidence="2">Membrane</location>
        <topology evidence="2">Multi-pass membrane protein</topology>
    </subcellularLocation>
</comment>
<comment type="similarity">
    <text evidence="2">Belongs to the TrbL/VirB6 family.</text>
</comment>
<protein>
    <recommendedName>
        <fullName>Protein VirB6</fullName>
    </recommendedName>
</protein>
<gene>
    <name type="primary">virB6</name>
</gene>
<reference key="1">
    <citation type="journal article" date="1988" name="J. Biol. Chem.">
        <title>Characterization of the virB operon from an Agrobacterium tumefaciens Ti plasmid.</title>
        <authorList>
            <person name="Ward J.E."/>
            <person name="Akiyoshi D.E."/>
            <person name="Regier D."/>
            <person name="Datta A."/>
            <person name="Gordon M.P."/>
            <person name="Nester E.W."/>
        </authorList>
    </citation>
    <scope>NUCLEOTIDE SEQUENCE [GENOMIC DNA]</scope>
</reference>
<reference key="2">
    <citation type="journal article" date="1990" name="J. Biol. Chem.">
        <authorList>
            <person name="Ward J.E."/>
            <person name="Akiyoshi D.E."/>
            <person name="Regier D."/>
            <person name="Datta A."/>
            <person name="Gordon M.P."/>
            <person name="Nester E.W."/>
        </authorList>
    </citation>
    <scope>ERRATUM OF PUBMED:3281947</scope>
    <scope>SEQUENCE REVISION</scope>
</reference>
<proteinExistence type="inferred from homology"/>
<name>VIRB6_RHIRD</name>
<organism>
    <name type="scientific">Rhizobium radiobacter</name>
    <name type="common">Agrobacterium tumefaciens</name>
    <name type="synonym">Agrobacterium radiobacter</name>
    <dbReference type="NCBI Taxonomy" id="358"/>
    <lineage>
        <taxon>Bacteria</taxon>
        <taxon>Pseudomonadati</taxon>
        <taxon>Pseudomonadota</taxon>
        <taxon>Alphaproteobacteria</taxon>
        <taxon>Hyphomicrobiales</taxon>
        <taxon>Rhizobiaceae</taxon>
        <taxon>Rhizobium/Agrobacterium group</taxon>
        <taxon>Agrobacterium</taxon>
        <taxon>Agrobacterium tumefaciens complex</taxon>
    </lineage>
</organism>
<keyword id="KW-0192">Crown gall tumor</keyword>
<keyword id="KW-0472">Membrane</keyword>
<keyword id="KW-0614">Plasmid</keyword>
<keyword id="KW-0812">Transmembrane</keyword>
<keyword id="KW-1133">Transmembrane helix</keyword>
<evidence type="ECO:0000255" key="1"/>
<evidence type="ECO:0000305" key="2"/>
<dbReference type="EMBL" id="J03216">
    <property type="protein sequence ID" value="AAA88651.1"/>
    <property type="molecule type" value="Genomic_DNA"/>
</dbReference>
<dbReference type="PIR" id="G28621">
    <property type="entry name" value="B6AGA6"/>
</dbReference>
<dbReference type="SMR" id="P09779"/>
<dbReference type="GO" id="GO:0016020">
    <property type="term" value="C:membrane"/>
    <property type="evidence" value="ECO:0007669"/>
    <property type="project" value="UniProtKB-SubCell"/>
</dbReference>
<dbReference type="GO" id="GO:0030255">
    <property type="term" value="P:protein secretion by the type IV secretion system"/>
    <property type="evidence" value="ECO:0007669"/>
    <property type="project" value="InterPro"/>
</dbReference>
<dbReference type="InterPro" id="IPR007688">
    <property type="entry name" value="Conjugal_tfr_TrbL/VirB6"/>
</dbReference>
<dbReference type="NCBIfam" id="NF010426">
    <property type="entry name" value="PRK13852.1"/>
    <property type="match status" value="1"/>
</dbReference>
<dbReference type="Pfam" id="PF04610">
    <property type="entry name" value="TrbL"/>
    <property type="match status" value="1"/>
</dbReference>